<dbReference type="EMBL" id="CP001139">
    <property type="protein sequence ID" value="ACH65886.1"/>
    <property type="molecule type" value="Genomic_DNA"/>
</dbReference>
<dbReference type="RefSeq" id="WP_005420764.1">
    <property type="nucleotide sequence ID" value="NC_011184.1"/>
</dbReference>
<dbReference type="SMR" id="B5FAJ9"/>
<dbReference type="GeneID" id="54164821"/>
<dbReference type="KEGG" id="vfm:VFMJ11_2221"/>
<dbReference type="HOGENOM" id="CLU_133780_0_0_6"/>
<dbReference type="Proteomes" id="UP000001857">
    <property type="component" value="Chromosome I"/>
</dbReference>
<dbReference type="GO" id="GO:0005829">
    <property type="term" value="C:cytosol"/>
    <property type="evidence" value="ECO:0007669"/>
    <property type="project" value="TreeGrafter"/>
</dbReference>
<dbReference type="GO" id="GO:0008861">
    <property type="term" value="F:formate C-acetyltransferase activity"/>
    <property type="evidence" value="ECO:0007669"/>
    <property type="project" value="TreeGrafter"/>
</dbReference>
<dbReference type="FunFam" id="3.20.70.20:FF:000002">
    <property type="entry name" value="Autonomous glycyl radical cofactor"/>
    <property type="match status" value="1"/>
</dbReference>
<dbReference type="Gene3D" id="3.20.70.20">
    <property type="match status" value="1"/>
</dbReference>
<dbReference type="HAMAP" id="MF_00806">
    <property type="entry name" value="GrcA"/>
    <property type="match status" value="1"/>
</dbReference>
<dbReference type="InterPro" id="IPR050244">
    <property type="entry name" value="Auton_GlycylRad_Cofactor"/>
</dbReference>
<dbReference type="InterPro" id="IPR019777">
    <property type="entry name" value="Form_AcTrfase_GR_CS"/>
</dbReference>
<dbReference type="InterPro" id="IPR001150">
    <property type="entry name" value="Gly_radical"/>
</dbReference>
<dbReference type="InterPro" id="IPR011140">
    <property type="entry name" value="Glycyl_radical_cofactor_GrcA"/>
</dbReference>
<dbReference type="NCBIfam" id="TIGR04365">
    <property type="entry name" value="spare_glycyl"/>
    <property type="match status" value="1"/>
</dbReference>
<dbReference type="PANTHER" id="PTHR30191">
    <property type="entry name" value="FORMATE ACETYLTRANSFERASE"/>
    <property type="match status" value="1"/>
</dbReference>
<dbReference type="PANTHER" id="PTHR30191:SF0">
    <property type="entry name" value="FORMATE ACETYLTRANSFERASE 1"/>
    <property type="match status" value="1"/>
</dbReference>
<dbReference type="Pfam" id="PF01228">
    <property type="entry name" value="Gly_radical"/>
    <property type="match status" value="1"/>
</dbReference>
<dbReference type="PIRSF" id="PIRSF000378">
    <property type="entry name" value="Gly_radicl_yfiD"/>
    <property type="match status" value="1"/>
</dbReference>
<dbReference type="SUPFAM" id="SSF51998">
    <property type="entry name" value="PFL-like glycyl radical enzymes"/>
    <property type="match status" value="1"/>
</dbReference>
<dbReference type="PROSITE" id="PS00850">
    <property type="entry name" value="GLY_RADICAL_1"/>
    <property type="match status" value="1"/>
</dbReference>
<dbReference type="PROSITE" id="PS51149">
    <property type="entry name" value="GLY_RADICAL_2"/>
    <property type="match status" value="1"/>
</dbReference>
<protein>
    <recommendedName>
        <fullName evidence="1">Autonomous glycyl radical cofactor</fullName>
    </recommendedName>
</protein>
<reference key="1">
    <citation type="submission" date="2008-08" db="EMBL/GenBank/DDBJ databases">
        <title>Complete sequence of Vibrio fischeri strain MJ11.</title>
        <authorList>
            <person name="Mandel M.J."/>
            <person name="Stabb E.V."/>
            <person name="Ruby E.G."/>
            <person name="Ferriera S."/>
            <person name="Johnson J."/>
            <person name="Kravitz S."/>
            <person name="Beeson K."/>
            <person name="Sutton G."/>
            <person name="Rogers Y.-H."/>
            <person name="Friedman R."/>
            <person name="Frazier M."/>
            <person name="Venter J.C."/>
        </authorList>
    </citation>
    <scope>NUCLEOTIDE SEQUENCE [LARGE SCALE GENOMIC DNA]</scope>
    <source>
        <strain>MJ11</strain>
    </source>
</reference>
<sequence>MITGIQITKAANDDLLNSIWLLDSEKNEARCVVATAGFEADQVIAASELGEYESRDVAIEKAPKIEGGQHLNVNVLQRDTLEDAVKHPENYPQLTIRVSGYAVRFNSLTTEQQKDVIARTFTESL</sequence>
<evidence type="ECO:0000255" key="1">
    <source>
        <dbReference type="HAMAP-Rule" id="MF_00806"/>
    </source>
</evidence>
<accession>B5FAJ9</accession>
<organism>
    <name type="scientific">Aliivibrio fischeri (strain MJ11)</name>
    <name type="common">Vibrio fischeri</name>
    <dbReference type="NCBI Taxonomy" id="388396"/>
    <lineage>
        <taxon>Bacteria</taxon>
        <taxon>Pseudomonadati</taxon>
        <taxon>Pseudomonadota</taxon>
        <taxon>Gammaproteobacteria</taxon>
        <taxon>Vibrionales</taxon>
        <taxon>Vibrionaceae</taxon>
        <taxon>Aliivibrio</taxon>
    </lineage>
</organism>
<keyword id="KW-0556">Organic radical</keyword>
<comment type="function">
    <text evidence="1">Acts as a radical domain for damaged PFL and possibly other radical proteins.</text>
</comment>
<feature type="chain" id="PRO_1000134003" description="Autonomous glycyl radical cofactor">
    <location>
        <begin position="1"/>
        <end position="125"/>
    </location>
</feature>
<feature type="domain" description="Glycine radical" evidence="1">
    <location>
        <begin position="5"/>
        <end position="125"/>
    </location>
</feature>
<feature type="modified residue" description="Glycine radical" evidence="1">
    <location>
        <position position="100"/>
    </location>
</feature>
<name>GRCA_ALIFM</name>
<proteinExistence type="inferred from homology"/>
<gene>
    <name evidence="1" type="primary">grcA</name>
    <name type="ordered locus">VFMJ11_2221</name>
</gene>